<feature type="chain" id="PRO_1000024180" description="Dihydroorotate dehydrogenase (quinone)">
    <location>
        <begin position="1"/>
        <end position="336"/>
    </location>
</feature>
<feature type="active site" description="Nucleophile" evidence="1">
    <location>
        <position position="175"/>
    </location>
</feature>
<feature type="binding site" evidence="1">
    <location>
        <begin position="62"/>
        <end position="66"/>
    </location>
    <ligand>
        <name>FMN</name>
        <dbReference type="ChEBI" id="CHEBI:58210"/>
    </ligand>
</feature>
<feature type="binding site" evidence="1">
    <location>
        <position position="66"/>
    </location>
    <ligand>
        <name>substrate</name>
    </ligand>
</feature>
<feature type="binding site" evidence="1">
    <location>
        <position position="86"/>
    </location>
    <ligand>
        <name>FMN</name>
        <dbReference type="ChEBI" id="CHEBI:58210"/>
    </ligand>
</feature>
<feature type="binding site" evidence="1">
    <location>
        <begin position="111"/>
        <end position="115"/>
    </location>
    <ligand>
        <name>substrate</name>
    </ligand>
</feature>
<feature type="binding site" evidence="1">
    <location>
        <position position="139"/>
    </location>
    <ligand>
        <name>FMN</name>
        <dbReference type="ChEBI" id="CHEBI:58210"/>
    </ligand>
</feature>
<feature type="binding site" evidence="1">
    <location>
        <position position="172"/>
    </location>
    <ligand>
        <name>FMN</name>
        <dbReference type="ChEBI" id="CHEBI:58210"/>
    </ligand>
</feature>
<feature type="binding site" evidence="1">
    <location>
        <position position="172"/>
    </location>
    <ligand>
        <name>substrate</name>
    </ligand>
</feature>
<feature type="binding site" evidence="1">
    <location>
        <position position="177"/>
    </location>
    <ligand>
        <name>substrate</name>
    </ligand>
</feature>
<feature type="binding site" evidence="1">
    <location>
        <position position="217"/>
    </location>
    <ligand>
        <name>FMN</name>
        <dbReference type="ChEBI" id="CHEBI:58210"/>
    </ligand>
</feature>
<feature type="binding site" evidence="1">
    <location>
        <position position="245"/>
    </location>
    <ligand>
        <name>FMN</name>
        <dbReference type="ChEBI" id="CHEBI:58210"/>
    </ligand>
</feature>
<feature type="binding site" evidence="1">
    <location>
        <begin position="246"/>
        <end position="247"/>
    </location>
    <ligand>
        <name>substrate</name>
    </ligand>
</feature>
<feature type="binding site" evidence="1">
    <location>
        <position position="268"/>
    </location>
    <ligand>
        <name>FMN</name>
        <dbReference type="ChEBI" id="CHEBI:58210"/>
    </ligand>
</feature>
<feature type="binding site" evidence="1">
    <location>
        <position position="297"/>
    </location>
    <ligand>
        <name>FMN</name>
        <dbReference type="ChEBI" id="CHEBI:58210"/>
    </ligand>
</feature>
<feature type="binding site" evidence="1">
    <location>
        <begin position="318"/>
        <end position="319"/>
    </location>
    <ligand>
        <name>FMN</name>
        <dbReference type="ChEBI" id="CHEBI:58210"/>
    </ligand>
</feature>
<gene>
    <name evidence="1" type="primary">pyrD</name>
    <name type="ordered locus">KPN78578_09490</name>
    <name type="ORF">KPN_00974</name>
</gene>
<dbReference type="EC" id="1.3.5.2" evidence="1"/>
<dbReference type="EMBL" id="CP000647">
    <property type="protein sequence ID" value="ABR76410.1"/>
    <property type="molecule type" value="Genomic_DNA"/>
</dbReference>
<dbReference type="RefSeq" id="WP_012068518.1">
    <property type="nucleotide sequence ID" value="NC_009648.1"/>
</dbReference>
<dbReference type="SMR" id="A6T739"/>
<dbReference type="STRING" id="272620.KPN_00974"/>
<dbReference type="PaxDb" id="272620-KPN_00974"/>
<dbReference type="EnsemblBacteria" id="ABR76410">
    <property type="protein sequence ID" value="ABR76410"/>
    <property type="gene ID" value="KPN_00974"/>
</dbReference>
<dbReference type="KEGG" id="kpn:KPN_00974"/>
<dbReference type="HOGENOM" id="CLU_013640_2_0_6"/>
<dbReference type="UniPathway" id="UPA00070">
    <property type="reaction ID" value="UER00946"/>
</dbReference>
<dbReference type="Proteomes" id="UP000000265">
    <property type="component" value="Chromosome"/>
</dbReference>
<dbReference type="GO" id="GO:0005737">
    <property type="term" value="C:cytoplasm"/>
    <property type="evidence" value="ECO:0007669"/>
    <property type="project" value="InterPro"/>
</dbReference>
<dbReference type="GO" id="GO:0005886">
    <property type="term" value="C:plasma membrane"/>
    <property type="evidence" value="ECO:0007669"/>
    <property type="project" value="UniProtKB-SubCell"/>
</dbReference>
<dbReference type="GO" id="GO:0106430">
    <property type="term" value="F:dihydroorotate dehydrogenase (quinone) activity"/>
    <property type="evidence" value="ECO:0007669"/>
    <property type="project" value="UniProtKB-EC"/>
</dbReference>
<dbReference type="GO" id="GO:0006207">
    <property type="term" value="P:'de novo' pyrimidine nucleobase biosynthetic process"/>
    <property type="evidence" value="ECO:0007669"/>
    <property type="project" value="InterPro"/>
</dbReference>
<dbReference type="GO" id="GO:0044205">
    <property type="term" value="P:'de novo' UMP biosynthetic process"/>
    <property type="evidence" value="ECO:0007669"/>
    <property type="project" value="UniProtKB-UniRule"/>
</dbReference>
<dbReference type="CDD" id="cd04738">
    <property type="entry name" value="DHOD_2_like"/>
    <property type="match status" value="1"/>
</dbReference>
<dbReference type="FunFam" id="3.20.20.70:FF:000028">
    <property type="entry name" value="Dihydroorotate dehydrogenase (quinone)"/>
    <property type="match status" value="1"/>
</dbReference>
<dbReference type="Gene3D" id="3.20.20.70">
    <property type="entry name" value="Aldolase class I"/>
    <property type="match status" value="1"/>
</dbReference>
<dbReference type="HAMAP" id="MF_00225">
    <property type="entry name" value="DHO_dh_type2"/>
    <property type="match status" value="1"/>
</dbReference>
<dbReference type="InterPro" id="IPR013785">
    <property type="entry name" value="Aldolase_TIM"/>
</dbReference>
<dbReference type="InterPro" id="IPR050074">
    <property type="entry name" value="DHO_dehydrogenase"/>
</dbReference>
<dbReference type="InterPro" id="IPR012135">
    <property type="entry name" value="Dihydroorotate_DH_1_2"/>
</dbReference>
<dbReference type="InterPro" id="IPR005719">
    <property type="entry name" value="Dihydroorotate_DH_2"/>
</dbReference>
<dbReference type="InterPro" id="IPR005720">
    <property type="entry name" value="Dihydroorotate_DH_cat"/>
</dbReference>
<dbReference type="InterPro" id="IPR001295">
    <property type="entry name" value="Dihydroorotate_DH_CS"/>
</dbReference>
<dbReference type="NCBIfam" id="NF003644">
    <property type="entry name" value="PRK05286.1-1"/>
    <property type="match status" value="1"/>
</dbReference>
<dbReference type="NCBIfam" id="NF003645">
    <property type="entry name" value="PRK05286.1-2"/>
    <property type="match status" value="1"/>
</dbReference>
<dbReference type="NCBIfam" id="NF003646">
    <property type="entry name" value="PRK05286.1-4"/>
    <property type="match status" value="1"/>
</dbReference>
<dbReference type="NCBIfam" id="NF003652">
    <property type="entry name" value="PRK05286.2-5"/>
    <property type="match status" value="1"/>
</dbReference>
<dbReference type="NCBIfam" id="TIGR01036">
    <property type="entry name" value="pyrD_sub2"/>
    <property type="match status" value="1"/>
</dbReference>
<dbReference type="PANTHER" id="PTHR48109:SF4">
    <property type="entry name" value="DIHYDROOROTATE DEHYDROGENASE (QUINONE), MITOCHONDRIAL"/>
    <property type="match status" value="1"/>
</dbReference>
<dbReference type="PANTHER" id="PTHR48109">
    <property type="entry name" value="DIHYDROOROTATE DEHYDROGENASE (QUINONE), MITOCHONDRIAL-RELATED"/>
    <property type="match status" value="1"/>
</dbReference>
<dbReference type="Pfam" id="PF01180">
    <property type="entry name" value="DHO_dh"/>
    <property type="match status" value="1"/>
</dbReference>
<dbReference type="PIRSF" id="PIRSF000164">
    <property type="entry name" value="DHO_oxidase"/>
    <property type="match status" value="1"/>
</dbReference>
<dbReference type="SUPFAM" id="SSF51395">
    <property type="entry name" value="FMN-linked oxidoreductases"/>
    <property type="match status" value="1"/>
</dbReference>
<dbReference type="PROSITE" id="PS00911">
    <property type="entry name" value="DHODEHASE_1"/>
    <property type="match status" value="1"/>
</dbReference>
<dbReference type="PROSITE" id="PS00912">
    <property type="entry name" value="DHODEHASE_2"/>
    <property type="match status" value="1"/>
</dbReference>
<protein>
    <recommendedName>
        <fullName evidence="1">Dihydroorotate dehydrogenase (quinone)</fullName>
        <ecNumber evidence="1">1.3.5.2</ecNumber>
    </recommendedName>
    <alternativeName>
        <fullName evidence="1">DHOdehase</fullName>
        <shortName evidence="1">DHOD</shortName>
        <shortName evidence="1">DHODase</shortName>
    </alternativeName>
    <alternativeName>
        <fullName evidence="1">Dihydroorotate oxidase</fullName>
    </alternativeName>
</protein>
<accession>A6T739</accession>
<sequence>MYYPFVRKALFQLDPERAHEVTFQQLRRVTGTPLEMLVRQKVPARPVTCMGLTFKNPLGLAAGLDKNGECIDALGAMGFGSIEIGTVTPRPQPGNDKPRIFRLVDAEGLINRMGFNNHGVDNLVENVKKAHFDGVLGINIGKNKDTPVEHGKDDYLICMEKVYPYAGYIAINISSPNTPGLRTLQYGEALDDLLSGIKNKQLELQQKHQKYVPVAIKIAPDLLPEELIQVADSLVRHNIDGVIATNTTLDRSLVQGMKHCDETGGLSGRPLQLKSTEIIRMLSAELNGRLPIIGVGGIDSVIAAREKIAAGASLVQIYSGFIFKGPPLIKEIVTHI</sequence>
<evidence type="ECO:0000255" key="1">
    <source>
        <dbReference type="HAMAP-Rule" id="MF_00225"/>
    </source>
</evidence>
<proteinExistence type="inferred from homology"/>
<reference key="1">
    <citation type="submission" date="2006-09" db="EMBL/GenBank/DDBJ databases">
        <authorList>
            <consortium name="The Klebsiella pneumonia Genome Sequencing Project"/>
            <person name="McClelland M."/>
            <person name="Sanderson E.K."/>
            <person name="Spieth J."/>
            <person name="Clifton W.S."/>
            <person name="Latreille P."/>
            <person name="Sabo A."/>
            <person name="Pepin K."/>
            <person name="Bhonagiri V."/>
            <person name="Porwollik S."/>
            <person name="Ali J."/>
            <person name="Wilson R.K."/>
        </authorList>
    </citation>
    <scope>NUCLEOTIDE SEQUENCE [LARGE SCALE GENOMIC DNA]</scope>
    <source>
        <strain>ATCC 700721 / MGH 78578</strain>
    </source>
</reference>
<name>PYRD_KLEP7</name>
<keyword id="KW-1003">Cell membrane</keyword>
<keyword id="KW-0285">Flavoprotein</keyword>
<keyword id="KW-0288">FMN</keyword>
<keyword id="KW-0472">Membrane</keyword>
<keyword id="KW-0560">Oxidoreductase</keyword>
<keyword id="KW-0665">Pyrimidine biosynthesis</keyword>
<comment type="function">
    <text evidence="1">Catalyzes the conversion of dihydroorotate to orotate with quinone as electron acceptor.</text>
</comment>
<comment type="catalytic activity">
    <reaction evidence="1">
        <text>(S)-dihydroorotate + a quinone = orotate + a quinol</text>
        <dbReference type="Rhea" id="RHEA:30187"/>
        <dbReference type="ChEBI" id="CHEBI:24646"/>
        <dbReference type="ChEBI" id="CHEBI:30839"/>
        <dbReference type="ChEBI" id="CHEBI:30864"/>
        <dbReference type="ChEBI" id="CHEBI:132124"/>
        <dbReference type="EC" id="1.3.5.2"/>
    </reaction>
</comment>
<comment type="cofactor">
    <cofactor evidence="1">
        <name>FMN</name>
        <dbReference type="ChEBI" id="CHEBI:58210"/>
    </cofactor>
    <text evidence="1">Binds 1 FMN per subunit.</text>
</comment>
<comment type="pathway">
    <text evidence="1">Pyrimidine metabolism; UMP biosynthesis via de novo pathway; orotate from (S)-dihydroorotate (quinone route): step 1/1.</text>
</comment>
<comment type="subunit">
    <text evidence="1">Monomer.</text>
</comment>
<comment type="subcellular location">
    <subcellularLocation>
        <location evidence="1">Cell membrane</location>
        <topology evidence="1">Peripheral membrane protein</topology>
    </subcellularLocation>
</comment>
<comment type="similarity">
    <text evidence="1">Belongs to the dihydroorotate dehydrogenase family. Type 2 subfamily.</text>
</comment>
<organism>
    <name type="scientific">Klebsiella pneumoniae subsp. pneumoniae (strain ATCC 700721 / MGH 78578)</name>
    <dbReference type="NCBI Taxonomy" id="272620"/>
    <lineage>
        <taxon>Bacteria</taxon>
        <taxon>Pseudomonadati</taxon>
        <taxon>Pseudomonadota</taxon>
        <taxon>Gammaproteobacteria</taxon>
        <taxon>Enterobacterales</taxon>
        <taxon>Enterobacteriaceae</taxon>
        <taxon>Klebsiella/Raoultella group</taxon>
        <taxon>Klebsiella</taxon>
        <taxon>Klebsiella pneumoniae complex</taxon>
    </lineage>
</organism>